<feature type="chain" id="PRO_0000443343" description="Major facilitator-type transporter hxnZ">
    <location>
        <begin position="1"/>
        <end position="553"/>
    </location>
</feature>
<feature type="transmembrane region" description="Helical" evidence="1">
    <location>
        <begin position="89"/>
        <end position="109"/>
    </location>
</feature>
<feature type="transmembrane region" description="Helical" evidence="1">
    <location>
        <begin position="128"/>
        <end position="148"/>
    </location>
</feature>
<feature type="transmembrane region" description="Helical" evidence="1">
    <location>
        <begin position="152"/>
        <end position="172"/>
    </location>
</feature>
<feature type="transmembrane region" description="Helical" evidence="1">
    <location>
        <begin position="174"/>
        <end position="194"/>
    </location>
</feature>
<feature type="transmembrane region" description="Helical" evidence="1">
    <location>
        <begin position="213"/>
        <end position="233"/>
    </location>
</feature>
<feature type="transmembrane region" description="Helical" evidence="1">
    <location>
        <begin position="257"/>
        <end position="277"/>
    </location>
</feature>
<feature type="transmembrane region" description="Helical" evidence="1">
    <location>
        <begin position="366"/>
        <end position="386"/>
    </location>
</feature>
<feature type="transmembrane region" description="Helical" evidence="1">
    <location>
        <begin position="409"/>
        <end position="429"/>
    </location>
</feature>
<feature type="transmembrane region" description="Helical" evidence="1">
    <location>
        <begin position="433"/>
        <end position="453"/>
    </location>
</feature>
<feature type="transmembrane region" description="Helical" evidence="1">
    <location>
        <begin position="459"/>
        <end position="481"/>
    </location>
</feature>
<feature type="transmembrane region" description="Helical" evidence="1">
    <location>
        <begin position="496"/>
        <end position="516"/>
    </location>
</feature>
<feature type="transmembrane region" description="Helical" evidence="1">
    <location>
        <begin position="525"/>
        <end position="545"/>
    </location>
</feature>
<feature type="glycosylation site" description="N-linked (GlcNAc...) asparagine" evidence="2">
    <location>
        <position position="235"/>
    </location>
</feature>
<reference key="1">
    <citation type="journal article" date="2005" name="Nature">
        <title>Sequencing of Aspergillus nidulans and comparative analysis with A. fumigatus and A. oryzae.</title>
        <authorList>
            <person name="Galagan J.E."/>
            <person name="Calvo S.E."/>
            <person name="Cuomo C."/>
            <person name="Ma L.-J."/>
            <person name="Wortman J.R."/>
            <person name="Batzoglou S."/>
            <person name="Lee S.-I."/>
            <person name="Bastuerkmen M."/>
            <person name="Spevak C.C."/>
            <person name="Clutterbuck J."/>
            <person name="Kapitonov V."/>
            <person name="Jurka J."/>
            <person name="Scazzocchio C."/>
            <person name="Farman M.L."/>
            <person name="Butler J."/>
            <person name="Purcell S."/>
            <person name="Harris S."/>
            <person name="Braus G.H."/>
            <person name="Draht O."/>
            <person name="Busch S."/>
            <person name="D'Enfert C."/>
            <person name="Bouchier C."/>
            <person name="Goldman G.H."/>
            <person name="Bell-Pedersen D."/>
            <person name="Griffiths-Jones S."/>
            <person name="Doonan J.H."/>
            <person name="Yu J."/>
            <person name="Vienken K."/>
            <person name="Pain A."/>
            <person name="Freitag M."/>
            <person name="Selker E.U."/>
            <person name="Archer D.B."/>
            <person name="Penalva M.A."/>
            <person name="Oakley B.R."/>
            <person name="Momany M."/>
            <person name="Tanaka T."/>
            <person name="Kumagai T."/>
            <person name="Asai K."/>
            <person name="Machida M."/>
            <person name="Nierman W.C."/>
            <person name="Denning D.W."/>
            <person name="Caddick M.X."/>
            <person name="Hynes M."/>
            <person name="Paoletti M."/>
            <person name="Fischer R."/>
            <person name="Miller B.L."/>
            <person name="Dyer P.S."/>
            <person name="Sachs M.S."/>
            <person name="Osmani S.A."/>
            <person name="Birren B.W."/>
        </authorList>
    </citation>
    <scope>NUCLEOTIDE SEQUENCE [LARGE SCALE GENOMIC DNA]</scope>
    <source>
        <strain>FGSC A4 / ATCC 38163 / CBS 112.46 / NRRL 194 / M139</strain>
    </source>
</reference>
<reference key="2">
    <citation type="journal article" date="2009" name="Fungal Genet. Biol.">
        <title>The 2008 update of the Aspergillus nidulans genome annotation: a community effort.</title>
        <authorList>
            <person name="Wortman J.R."/>
            <person name="Gilsenan J.M."/>
            <person name="Joardar V."/>
            <person name="Deegan J."/>
            <person name="Clutterbuck J."/>
            <person name="Andersen M.R."/>
            <person name="Archer D."/>
            <person name="Bencina M."/>
            <person name="Braus G."/>
            <person name="Coutinho P."/>
            <person name="von Dohren H."/>
            <person name="Doonan J."/>
            <person name="Driessen A.J."/>
            <person name="Durek P."/>
            <person name="Espeso E."/>
            <person name="Fekete E."/>
            <person name="Flipphi M."/>
            <person name="Estrada C.G."/>
            <person name="Geysens S."/>
            <person name="Goldman G."/>
            <person name="de Groot P.W."/>
            <person name="Hansen K."/>
            <person name="Harris S.D."/>
            <person name="Heinekamp T."/>
            <person name="Helmstaedt K."/>
            <person name="Henrissat B."/>
            <person name="Hofmann G."/>
            <person name="Homan T."/>
            <person name="Horio T."/>
            <person name="Horiuchi H."/>
            <person name="James S."/>
            <person name="Jones M."/>
            <person name="Karaffa L."/>
            <person name="Karanyi Z."/>
            <person name="Kato M."/>
            <person name="Keller N."/>
            <person name="Kelly D.E."/>
            <person name="Kiel J.A."/>
            <person name="Kim J.M."/>
            <person name="van der Klei I.J."/>
            <person name="Klis F.M."/>
            <person name="Kovalchuk A."/>
            <person name="Krasevec N."/>
            <person name="Kubicek C.P."/>
            <person name="Liu B."/>
            <person name="Maccabe A."/>
            <person name="Meyer V."/>
            <person name="Mirabito P."/>
            <person name="Miskei M."/>
            <person name="Mos M."/>
            <person name="Mullins J."/>
            <person name="Nelson D.R."/>
            <person name="Nielsen J."/>
            <person name="Oakley B.R."/>
            <person name="Osmani S.A."/>
            <person name="Pakula T."/>
            <person name="Paszewski A."/>
            <person name="Paulsen I."/>
            <person name="Pilsyk S."/>
            <person name="Pocsi I."/>
            <person name="Punt P.J."/>
            <person name="Ram A.F."/>
            <person name="Ren Q."/>
            <person name="Robellet X."/>
            <person name="Robson G."/>
            <person name="Seiboth B."/>
            <person name="van Solingen P."/>
            <person name="Specht T."/>
            <person name="Sun J."/>
            <person name="Taheri-Talesh N."/>
            <person name="Takeshita N."/>
            <person name="Ussery D."/>
            <person name="vanKuyk P.A."/>
            <person name="Visser H."/>
            <person name="van de Vondervoort P.J."/>
            <person name="de Vries R.P."/>
            <person name="Walton J."/>
            <person name="Xiang X."/>
            <person name="Xiong Y."/>
            <person name="Zeng A.P."/>
            <person name="Brandt B.W."/>
            <person name="Cornell M.J."/>
            <person name="van den Hondel C.A."/>
            <person name="Visser J."/>
            <person name="Oliver S.G."/>
            <person name="Turner G."/>
        </authorList>
    </citation>
    <scope>GENOME REANNOTATION</scope>
    <source>
        <strain>FGSC A4 / ATCC 38163 / CBS 112.46 / NRRL 194 / M139</strain>
    </source>
</reference>
<reference key="3">
    <citation type="journal article" date="2017" name="Open Biol.">
        <title>A eukaryotic nicotinate-inducible gene cluster: convergent evolution in fungi and bacteria.</title>
        <authorList>
            <person name="Amon J."/>
            <person name="Fernandez-Martin R."/>
            <person name="Bokor E."/>
            <person name="Cultrone A."/>
            <person name="Kelly J.M."/>
            <person name="Flipphi M."/>
            <person name="Scazzocchio C."/>
            <person name="Hamari Z."/>
        </authorList>
    </citation>
    <scope>IDENTIFICATION</scope>
    <scope>INDUCTION</scope>
    <scope>FUNCTION</scope>
</reference>
<accession>C8VK15</accession>
<evidence type="ECO:0000255" key="1"/>
<evidence type="ECO:0000255" key="2">
    <source>
        <dbReference type="PROSITE-ProRule" id="PRU00498"/>
    </source>
</evidence>
<evidence type="ECO:0000269" key="3">
    <source>
    </source>
</evidence>
<evidence type="ECO:0000303" key="4">
    <source>
    </source>
</evidence>
<evidence type="ECO:0000305" key="5">
    <source>
    </source>
</evidence>
<sequence>MDISYPVINAGGLKNIASQIIMEIELDKRENRPTDNVPPDDIGKIEVVDDAEMEQFYGSSTTDAYRLKSELVSQCMADIGMGRFQWKLFTVAGFGWIVDNFCSQGISAVQPPIQQEFSGIKQVSYSSVAYYVGMIIGASFWGISSDLIGRKPAFNSTLAIAGIFLCAAAGTSNFIAFSALWAVIGTAAGGNVVCDSMILLEFIPGSHQYLLTALSGWWNLGQLVVSLLAWVFLANFSCPTDATPDTCSRADNMGWRYTLITLGGLSLAFTFVRIFVFKMPETPRYLLSQGNDQAAVDAVNYVARQNGKPEPLTLSMLQAIDVRLGFTPNAEERLSTKDILKENMQEFRGEHYQALFATRKLSQHTALIWAVWLIIGIAYPLYFNFLPSYLATRFTQDSSLDLTYRNYCIQSAVGVVGPLSAAVLVNTFLGRRWMMGISSIVTGVFLFAYVGVKTPMSSLAFSCVTGLLANFANQLSEYAIMYAFTPESFPAPHRGTASGTAASLLRFGGLVASLIASETGFTTAPIYASAALWVGVGVLCFGLPFETHGHAAI</sequence>
<keyword id="KW-1003">Cell membrane</keyword>
<keyword id="KW-0325">Glycoprotein</keyword>
<keyword id="KW-0472">Membrane</keyword>
<keyword id="KW-1185">Reference proteome</keyword>
<keyword id="KW-0812">Transmembrane</keyword>
<keyword id="KW-1133">Transmembrane helix</keyword>
<keyword id="KW-0813">Transport</keyword>
<comment type="function">
    <text evidence="3">Major facilitator-type transporter, part of the hnx cluster involved in the purine degradation (PubMed:29212709). The nicotinate hydroxylase hnxS accepts nicotinate as a substrate and catalyzes the first step of nicotinate catabolism (PubMed:29212709). The major facilitator-type transporters hxnP and hxnZ are probably involved in the uptake of nicotinate-derived metabolites, and the oxidoreductases hxnT and hxnY in the further metabolism of 6-OH nicotinic acid (PubMed:29212709).</text>
</comment>
<comment type="subcellular location">
    <subcellularLocation>
        <location evidence="5">Cell membrane</location>
        <topology evidence="1">Multi-pass membrane protein</topology>
    </subcellularLocation>
</comment>
<comment type="induction">
    <text evidence="3">Expression is induced by nicotinate and 6-OH nicotinate, subject to nitrogen metabolite repression mediated by the GATA factor areA, and strictly regulated by the cluster-specific transcription regulator hnxR (PubMed:29212709).</text>
</comment>
<comment type="similarity">
    <text evidence="1">Belongs to the major facilitator superfamily.</text>
</comment>
<proteinExistence type="evidence at transcript level"/>
<dbReference type="EMBL" id="BN001306">
    <property type="protein sequence ID" value="CBF82387.1"/>
    <property type="molecule type" value="Genomic_DNA"/>
</dbReference>
<dbReference type="RefSeq" id="XP_682444.1">
    <property type="nucleotide sequence ID" value="XM_677352.1"/>
</dbReference>
<dbReference type="SMR" id="C8VK15"/>
<dbReference type="STRING" id="227321.C8VK15"/>
<dbReference type="GlyCosmos" id="C8VK15">
    <property type="glycosylation" value="1 site, No reported glycans"/>
</dbReference>
<dbReference type="EnsemblFungi" id="CBF82387">
    <property type="protein sequence ID" value="CBF82387"/>
    <property type="gene ID" value="ANIA_11196"/>
</dbReference>
<dbReference type="GeneID" id="2868097"/>
<dbReference type="KEGG" id="ani:ANIA_11196"/>
<dbReference type="VEuPathDB" id="FungiDB:AN11196"/>
<dbReference type="eggNOG" id="KOG0253">
    <property type="taxonomic scope" value="Eukaryota"/>
</dbReference>
<dbReference type="HOGENOM" id="CLU_001265_52_2_1"/>
<dbReference type="InParanoid" id="C8VK15"/>
<dbReference type="OMA" id="GTPKYRC"/>
<dbReference type="OrthoDB" id="4139357at2759"/>
<dbReference type="Proteomes" id="UP000000560">
    <property type="component" value="Chromosome VI"/>
</dbReference>
<dbReference type="GO" id="GO:0016020">
    <property type="term" value="C:membrane"/>
    <property type="evidence" value="ECO:0000318"/>
    <property type="project" value="GO_Central"/>
</dbReference>
<dbReference type="GO" id="GO:0005886">
    <property type="term" value="C:plasma membrane"/>
    <property type="evidence" value="ECO:0007669"/>
    <property type="project" value="UniProtKB-SubCell"/>
</dbReference>
<dbReference type="GO" id="GO:0022857">
    <property type="term" value="F:transmembrane transporter activity"/>
    <property type="evidence" value="ECO:0007669"/>
    <property type="project" value="InterPro"/>
</dbReference>
<dbReference type="CDD" id="cd17316">
    <property type="entry name" value="MFS_SV2_like"/>
    <property type="match status" value="1"/>
</dbReference>
<dbReference type="FunFam" id="1.20.1250.20:FF:000171">
    <property type="entry name" value="MFS general substrate transporter"/>
    <property type="match status" value="1"/>
</dbReference>
<dbReference type="Gene3D" id="1.20.1250.20">
    <property type="entry name" value="MFS general substrate transporter like domains"/>
    <property type="match status" value="1"/>
</dbReference>
<dbReference type="InterPro" id="IPR011701">
    <property type="entry name" value="MFS"/>
</dbReference>
<dbReference type="InterPro" id="IPR020846">
    <property type="entry name" value="MFS_dom"/>
</dbReference>
<dbReference type="InterPro" id="IPR036259">
    <property type="entry name" value="MFS_trans_sf"/>
</dbReference>
<dbReference type="PANTHER" id="PTHR23511:SF5">
    <property type="entry name" value="MAJOR FACILITATOR-TYPE TRANSPORTER HXNZ-RELATED"/>
    <property type="match status" value="1"/>
</dbReference>
<dbReference type="PANTHER" id="PTHR23511">
    <property type="entry name" value="SYNAPTIC VESICLE GLYCOPROTEIN 2"/>
    <property type="match status" value="1"/>
</dbReference>
<dbReference type="Pfam" id="PF07690">
    <property type="entry name" value="MFS_1"/>
    <property type="match status" value="1"/>
</dbReference>
<dbReference type="SUPFAM" id="SSF103473">
    <property type="entry name" value="MFS general substrate transporter"/>
    <property type="match status" value="1"/>
</dbReference>
<dbReference type="PROSITE" id="PS50850">
    <property type="entry name" value="MFS"/>
    <property type="match status" value="1"/>
</dbReference>
<protein>
    <recommendedName>
        <fullName evidence="4">Major facilitator-type transporter hxnZ</fullName>
    </recommendedName>
    <alternativeName>
        <fullName evidence="4">Nicotinate catabolism cluster protein hxnZ</fullName>
    </alternativeName>
</protein>
<name>HXNZ_EMENI</name>
<organism>
    <name type="scientific">Emericella nidulans (strain FGSC A4 / ATCC 38163 / CBS 112.46 / NRRL 194 / M139)</name>
    <name type="common">Aspergillus nidulans</name>
    <dbReference type="NCBI Taxonomy" id="227321"/>
    <lineage>
        <taxon>Eukaryota</taxon>
        <taxon>Fungi</taxon>
        <taxon>Dikarya</taxon>
        <taxon>Ascomycota</taxon>
        <taxon>Pezizomycotina</taxon>
        <taxon>Eurotiomycetes</taxon>
        <taxon>Eurotiomycetidae</taxon>
        <taxon>Eurotiales</taxon>
        <taxon>Aspergillaceae</taxon>
        <taxon>Aspergillus</taxon>
        <taxon>Aspergillus subgen. Nidulantes</taxon>
    </lineage>
</organism>
<gene>
    <name evidence="4" type="primary">hxnZ</name>
    <name type="ORF">ANIA_11196</name>
</gene>